<feature type="chain" id="PRO_1000098553" description="Threonine--tRNA ligase">
    <location>
        <begin position="1"/>
        <end position="635"/>
    </location>
</feature>
<feature type="domain" description="TGS" evidence="2">
    <location>
        <begin position="1"/>
        <end position="61"/>
    </location>
</feature>
<feature type="region of interest" description="Catalytic" evidence="1">
    <location>
        <begin position="242"/>
        <end position="533"/>
    </location>
</feature>
<feature type="binding site" evidence="1">
    <location>
        <position position="333"/>
    </location>
    <ligand>
        <name>Zn(2+)</name>
        <dbReference type="ChEBI" id="CHEBI:29105"/>
    </ligand>
</feature>
<feature type="binding site" evidence="1">
    <location>
        <position position="384"/>
    </location>
    <ligand>
        <name>Zn(2+)</name>
        <dbReference type="ChEBI" id="CHEBI:29105"/>
    </ligand>
</feature>
<feature type="binding site" evidence="1">
    <location>
        <position position="510"/>
    </location>
    <ligand>
        <name>Zn(2+)</name>
        <dbReference type="ChEBI" id="CHEBI:29105"/>
    </ligand>
</feature>
<protein>
    <recommendedName>
        <fullName evidence="1">Threonine--tRNA ligase</fullName>
        <ecNumber evidence="1">6.1.1.3</ecNumber>
    </recommendedName>
    <alternativeName>
        <fullName evidence="1">Threonyl-tRNA synthetase</fullName>
        <shortName evidence="1">ThrRS</shortName>
    </alternativeName>
</protein>
<accession>B2SZG2</accession>
<gene>
    <name evidence="1" type="primary">thrS</name>
    <name type="ordered locus">Bphyt_2756</name>
</gene>
<name>SYT_PARPJ</name>
<reference key="1">
    <citation type="journal article" date="2011" name="J. Bacteriol.">
        <title>Complete genome sequence of the plant growth-promoting endophyte Burkholderia phytofirmans strain PsJN.</title>
        <authorList>
            <person name="Weilharter A."/>
            <person name="Mitter B."/>
            <person name="Shin M.V."/>
            <person name="Chain P.S."/>
            <person name="Nowak J."/>
            <person name="Sessitsch A."/>
        </authorList>
    </citation>
    <scope>NUCLEOTIDE SEQUENCE [LARGE SCALE GENOMIC DNA]</scope>
    <source>
        <strain>DSM 17436 / LMG 22146 / PsJN</strain>
    </source>
</reference>
<keyword id="KW-0030">Aminoacyl-tRNA synthetase</keyword>
<keyword id="KW-0067">ATP-binding</keyword>
<keyword id="KW-0963">Cytoplasm</keyword>
<keyword id="KW-0436">Ligase</keyword>
<keyword id="KW-0479">Metal-binding</keyword>
<keyword id="KW-0547">Nucleotide-binding</keyword>
<keyword id="KW-0648">Protein biosynthesis</keyword>
<keyword id="KW-0694">RNA-binding</keyword>
<keyword id="KW-0820">tRNA-binding</keyword>
<keyword id="KW-0862">Zinc</keyword>
<comment type="function">
    <text evidence="1">Catalyzes the attachment of threonine to tRNA(Thr) in a two-step reaction: L-threonine is first activated by ATP to form Thr-AMP and then transferred to the acceptor end of tRNA(Thr). Also edits incorrectly charged L-seryl-tRNA(Thr).</text>
</comment>
<comment type="catalytic activity">
    <reaction evidence="1">
        <text>tRNA(Thr) + L-threonine + ATP = L-threonyl-tRNA(Thr) + AMP + diphosphate + H(+)</text>
        <dbReference type="Rhea" id="RHEA:24624"/>
        <dbReference type="Rhea" id="RHEA-COMP:9670"/>
        <dbReference type="Rhea" id="RHEA-COMP:9704"/>
        <dbReference type="ChEBI" id="CHEBI:15378"/>
        <dbReference type="ChEBI" id="CHEBI:30616"/>
        <dbReference type="ChEBI" id="CHEBI:33019"/>
        <dbReference type="ChEBI" id="CHEBI:57926"/>
        <dbReference type="ChEBI" id="CHEBI:78442"/>
        <dbReference type="ChEBI" id="CHEBI:78534"/>
        <dbReference type="ChEBI" id="CHEBI:456215"/>
        <dbReference type="EC" id="6.1.1.3"/>
    </reaction>
</comment>
<comment type="cofactor">
    <cofactor evidence="1">
        <name>Zn(2+)</name>
        <dbReference type="ChEBI" id="CHEBI:29105"/>
    </cofactor>
    <text evidence="1">Binds 1 zinc ion per subunit.</text>
</comment>
<comment type="subunit">
    <text evidence="1">Homodimer.</text>
</comment>
<comment type="subcellular location">
    <subcellularLocation>
        <location evidence="1">Cytoplasm</location>
    </subcellularLocation>
</comment>
<comment type="similarity">
    <text evidence="1">Belongs to the class-II aminoacyl-tRNA synthetase family.</text>
</comment>
<proteinExistence type="inferred from homology"/>
<dbReference type="EC" id="6.1.1.3" evidence="1"/>
<dbReference type="EMBL" id="CP001052">
    <property type="protein sequence ID" value="ACD17150.1"/>
    <property type="molecule type" value="Genomic_DNA"/>
</dbReference>
<dbReference type="RefSeq" id="WP_012433740.1">
    <property type="nucleotide sequence ID" value="NC_010681.1"/>
</dbReference>
<dbReference type="SMR" id="B2SZG2"/>
<dbReference type="STRING" id="398527.Bphyt_2756"/>
<dbReference type="GeneID" id="97310574"/>
<dbReference type="KEGG" id="bpy:Bphyt_2756"/>
<dbReference type="eggNOG" id="COG0441">
    <property type="taxonomic scope" value="Bacteria"/>
</dbReference>
<dbReference type="HOGENOM" id="CLU_008554_0_1_4"/>
<dbReference type="OrthoDB" id="9802304at2"/>
<dbReference type="Proteomes" id="UP000001739">
    <property type="component" value="Chromosome 1"/>
</dbReference>
<dbReference type="GO" id="GO:0005829">
    <property type="term" value="C:cytosol"/>
    <property type="evidence" value="ECO:0007669"/>
    <property type="project" value="TreeGrafter"/>
</dbReference>
<dbReference type="GO" id="GO:0005524">
    <property type="term" value="F:ATP binding"/>
    <property type="evidence" value="ECO:0007669"/>
    <property type="project" value="UniProtKB-UniRule"/>
</dbReference>
<dbReference type="GO" id="GO:0046872">
    <property type="term" value="F:metal ion binding"/>
    <property type="evidence" value="ECO:0007669"/>
    <property type="project" value="UniProtKB-KW"/>
</dbReference>
<dbReference type="GO" id="GO:0004829">
    <property type="term" value="F:threonine-tRNA ligase activity"/>
    <property type="evidence" value="ECO:0007669"/>
    <property type="project" value="UniProtKB-UniRule"/>
</dbReference>
<dbReference type="GO" id="GO:0000049">
    <property type="term" value="F:tRNA binding"/>
    <property type="evidence" value="ECO:0007669"/>
    <property type="project" value="UniProtKB-KW"/>
</dbReference>
<dbReference type="GO" id="GO:0006435">
    <property type="term" value="P:threonyl-tRNA aminoacylation"/>
    <property type="evidence" value="ECO:0007669"/>
    <property type="project" value="UniProtKB-UniRule"/>
</dbReference>
<dbReference type="CDD" id="cd01667">
    <property type="entry name" value="TGS_ThrRS"/>
    <property type="match status" value="1"/>
</dbReference>
<dbReference type="CDD" id="cd00860">
    <property type="entry name" value="ThrRS_anticodon"/>
    <property type="match status" value="1"/>
</dbReference>
<dbReference type="CDD" id="cd00771">
    <property type="entry name" value="ThrRS_core"/>
    <property type="match status" value="1"/>
</dbReference>
<dbReference type="FunFam" id="3.10.20.30:FF:000005">
    <property type="entry name" value="Threonine--tRNA ligase"/>
    <property type="match status" value="1"/>
</dbReference>
<dbReference type="FunFam" id="3.30.54.20:FF:000002">
    <property type="entry name" value="Threonine--tRNA ligase"/>
    <property type="match status" value="1"/>
</dbReference>
<dbReference type="FunFam" id="3.30.930.10:FF:000002">
    <property type="entry name" value="Threonine--tRNA ligase"/>
    <property type="match status" value="1"/>
</dbReference>
<dbReference type="FunFam" id="3.40.50.800:FF:000001">
    <property type="entry name" value="Threonine--tRNA ligase"/>
    <property type="match status" value="1"/>
</dbReference>
<dbReference type="FunFam" id="3.30.980.10:FF:000005">
    <property type="entry name" value="Threonyl-tRNA synthetase, mitochondrial"/>
    <property type="match status" value="1"/>
</dbReference>
<dbReference type="Gene3D" id="3.10.20.30">
    <property type="match status" value="1"/>
</dbReference>
<dbReference type="Gene3D" id="3.30.54.20">
    <property type="match status" value="1"/>
</dbReference>
<dbReference type="Gene3D" id="3.40.50.800">
    <property type="entry name" value="Anticodon-binding domain"/>
    <property type="match status" value="1"/>
</dbReference>
<dbReference type="Gene3D" id="3.30.930.10">
    <property type="entry name" value="Bira Bifunctional Protein, Domain 2"/>
    <property type="match status" value="1"/>
</dbReference>
<dbReference type="Gene3D" id="3.30.980.10">
    <property type="entry name" value="Threonyl-trna Synthetase, Chain A, domain 2"/>
    <property type="match status" value="1"/>
</dbReference>
<dbReference type="HAMAP" id="MF_00184">
    <property type="entry name" value="Thr_tRNA_synth"/>
    <property type="match status" value="1"/>
</dbReference>
<dbReference type="InterPro" id="IPR002314">
    <property type="entry name" value="aa-tRNA-synt_IIb"/>
</dbReference>
<dbReference type="InterPro" id="IPR006195">
    <property type="entry name" value="aa-tRNA-synth_II"/>
</dbReference>
<dbReference type="InterPro" id="IPR045864">
    <property type="entry name" value="aa-tRNA-synth_II/BPL/LPL"/>
</dbReference>
<dbReference type="InterPro" id="IPR004154">
    <property type="entry name" value="Anticodon-bd"/>
</dbReference>
<dbReference type="InterPro" id="IPR036621">
    <property type="entry name" value="Anticodon-bd_dom_sf"/>
</dbReference>
<dbReference type="InterPro" id="IPR012675">
    <property type="entry name" value="Beta-grasp_dom_sf"/>
</dbReference>
<dbReference type="InterPro" id="IPR004095">
    <property type="entry name" value="TGS"/>
</dbReference>
<dbReference type="InterPro" id="IPR012676">
    <property type="entry name" value="TGS-like"/>
</dbReference>
<dbReference type="InterPro" id="IPR002320">
    <property type="entry name" value="Thr-tRNA-ligase_IIa"/>
</dbReference>
<dbReference type="InterPro" id="IPR018163">
    <property type="entry name" value="Thr/Ala-tRNA-synth_IIc_edit"/>
</dbReference>
<dbReference type="InterPro" id="IPR047246">
    <property type="entry name" value="ThrRS_anticodon"/>
</dbReference>
<dbReference type="InterPro" id="IPR033728">
    <property type="entry name" value="ThrRS_core"/>
</dbReference>
<dbReference type="InterPro" id="IPR012947">
    <property type="entry name" value="tRNA_SAD"/>
</dbReference>
<dbReference type="NCBIfam" id="TIGR00418">
    <property type="entry name" value="thrS"/>
    <property type="match status" value="1"/>
</dbReference>
<dbReference type="PANTHER" id="PTHR11451:SF44">
    <property type="entry name" value="THREONINE--TRNA LIGASE, CHLOROPLASTIC_MITOCHONDRIAL 2"/>
    <property type="match status" value="1"/>
</dbReference>
<dbReference type="PANTHER" id="PTHR11451">
    <property type="entry name" value="THREONINE-TRNA LIGASE"/>
    <property type="match status" value="1"/>
</dbReference>
<dbReference type="Pfam" id="PF03129">
    <property type="entry name" value="HGTP_anticodon"/>
    <property type="match status" value="1"/>
</dbReference>
<dbReference type="Pfam" id="PF02824">
    <property type="entry name" value="TGS"/>
    <property type="match status" value="1"/>
</dbReference>
<dbReference type="Pfam" id="PF00587">
    <property type="entry name" value="tRNA-synt_2b"/>
    <property type="match status" value="1"/>
</dbReference>
<dbReference type="Pfam" id="PF07973">
    <property type="entry name" value="tRNA_SAD"/>
    <property type="match status" value="1"/>
</dbReference>
<dbReference type="PRINTS" id="PR01047">
    <property type="entry name" value="TRNASYNTHTHR"/>
</dbReference>
<dbReference type="SMART" id="SM00863">
    <property type="entry name" value="tRNA_SAD"/>
    <property type="match status" value="1"/>
</dbReference>
<dbReference type="SUPFAM" id="SSF52954">
    <property type="entry name" value="Class II aaRS ABD-related"/>
    <property type="match status" value="1"/>
</dbReference>
<dbReference type="SUPFAM" id="SSF55681">
    <property type="entry name" value="Class II aaRS and biotin synthetases"/>
    <property type="match status" value="1"/>
</dbReference>
<dbReference type="SUPFAM" id="SSF81271">
    <property type="entry name" value="TGS-like"/>
    <property type="match status" value="1"/>
</dbReference>
<dbReference type="SUPFAM" id="SSF55186">
    <property type="entry name" value="ThrRS/AlaRS common domain"/>
    <property type="match status" value="1"/>
</dbReference>
<dbReference type="PROSITE" id="PS50862">
    <property type="entry name" value="AA_TRNA_LIGASE_II"/>
    <property type="match status" value="1"/>
</dbReference>
<dbReference type="PROSITE" id="PS51880">
    <property type="entry name" value="TGS"/>
    <property type="match status" value="1"/>
</dbReference>
<evidence type="ECO:0000255" key="1">
    <source>
        <dbReference type="HAMAP-Rule" id="MF_00184"/>
    </source>
</evidence>
<evidence type="ECO:0000255" key="2">
    <source>
        <dbReference type="PROSITE-ProRule" id="PRU01228"/>
    </source>
</evidence>
<organism>
    <name type="scientific">Paraburkholderia phytofirmans (strain DSM 17436 / LMG 22146 / PsJN)</name>
    <name type="common">Burkholderia phytofirmans</name>
    <dbReference type="NCBI Taxonomy" id="398527"/>
    <lineage>
        <taxon>Bacteria</taxon>
        <taxon>Pseudomonadati</taxon>
        <taxon>Pseudomonadota</taxon>
        <taxon>Betaproteobacteria</taxon>
        <taxon>Burkholderiales</taxon>
        <taxon>Burkholderiaceae</taxon>
        <taxon>Paraburkholderia</taxon>
    </lineage>
</organism>
<sequence>MVSIRLPDGSVRQYEHPVTVAEVAASIGPGLAKAALGGKIDGELVDTSALIDHDVALAIVTEKDADGLDIIRHSTAHLLAYAVKDLYPEAQVTIGPVIDNGFYYDFAYNRPFTPEDLEKIEKRMQELAKKDEPVSRRVVSRDEAVDYFKSIGEKYKAEIIESIPATDDIKLYSHGGFTDLCRGPHVPSTGKLKVFKLMKVAGAYWRGDSKNEQLQRIYGTAWTKKEDQEAYLHMLEEAEKRDHRKLGKQLDLFHMQDESPGMVFWHPRGWTLWQQVEQYMRRRVNDAGYLEIKTPMIMDRSLWEASGHWQNYRENMFTTESEKRDYAIKPMNCPGHVQVFNHGLRSYRDLPLRYAEFGSCHRNESSGALHGLMRVRGFVQDDAHIFCTEDQFISESIAFNTLAMSVYKDFGFDNVEIKLSLRPDARAGTDETWDRAEQGLREALTACGVTWEELPGEGAFYGPKVEYHIKDALGRSWQCGTLQLDMVLPERLGAEYVAEDNSRRRPIMLHRAIVGSMERFLGILIEHHAGAMPAWLAPMQVVVMNIAESQAEYAQSLAQSLQKQGVRVEADLRNEKISYKIREHTLEKVPYLLVVGDKEREAQTVAVRARGGVDLGVMPPDTFIERLRQDVQSFN</sequence>